<proteinExistence type="inferred from homology"/>
<comment type="function">
    <text evidence="1">Global transcriptional regulator that plays a key role in stress response and exerts either positive or negative regulation of genes. Acts by interacting with the C-terminal domain of the alpha subunit of the RNA polymerase (RNAP). This interaction can enhance binding of RNAP to the promoter region of target genes and stimulate their transcription, or block interaction of RNAP with activator.</text>
</comment>
<comment type="subunit">
    <text evidence="1">Interacts with the C-terminal domain of the alpha subunit of the RNAP.</text>
</comment>
<comment type="subcellular location">
    <subcellularLocation>
        <location evidence="1">Cytoplasm</location>
    </subcellularLocation>
</comment>
<comment type="similarity">
    <text evidence="1">Belongs to the ArsC family. Spx subfamily.</text>
</comment>
<reference key="1">
    <citation type="journal article" date="2001" name="Proc. Natl. Acad. Sci. U.S.A.">
        <title>Complete genome sequence of an M1 strain of Streptococcus pyogenes.</title>
        <authorList>
            <person name="Ferretti J.J."/>
            <person name="McShan W.M."/>
            <person name="Ajdic D.J."/>
            <person name="Savic D.J."/>
            <person name="Savic G."/>
            <person name="Lyon K."/>
            <person name="Primeaux C."/>
            <person name="Sezate S."/>
            <person name="Suvorov A.N."/>
            <person name="Kenton S."/>
            <person name="Lai H.S."/>
            <person name="Lin S.P."/>
            <person name="Qian Y."/>
            <person name="Jia H.G."/>
            <person name="Najar F.Z."/>
            <person name="Ren Q."/>
            <person name="Zhu H."/>
            <person name="Song L."/>
            <person name="White J."/>
            <person name="Yuan X."/>
            <person name="Clifton S.W."/>
            <person name="Roe B.A."/>
            <person name="McLaughlin R.E."/>
        </authorList>
    </citation>
    <scope>NUCLEOTIDE SEQUENCE [LARGE SCALE GENOMIC DNA]</scope>
    <source>
        <strain>ATCC 700294 / SF370 / Serotype M1</strain>
    </source>
</reference>
<reference key="2">
    <citation type="journal article" date="2005" name="J. Infect. Dis.">
        <title>Evolutionary origin and emergence of a highly successful clone of serotype M1 group A Streptococcus involved multiple horizontal gene transfer events.</title>
        <authorList>
            <person name="Sumby P."/>
            <person name="Porcella S.F."/>
            <person name="Madrigal A.G."/>
            <person name="Barbian K.D."/>
            <person name="Virtaneva K."/>
            <person name="Ricklefs S.M."/>
            <person name="Sturdevant D.E."/>
            <person name="Graham M.R."/>
            <person name="Vuopio-Varkila J."/>
            <person name="Hoe N.P."/>
            <person name="Musser J.M."/>
        </authorList>
    </citation>
    <scope>NUCLEOTIDE SEQUENCE [LARGE SCALE GENOMIC DNA]</scope>
    <source>
        <strain>ATCC BAA-947 / MGAS5005 / Serotype M1</strain>
    </source>
</reference>
<accession>P60381</accession>
<accession>Q48YJ5</accession>
<accession>Q99ZF7</accession>
<gene>
    <name evidence="1" type="primary">spx</name>
    <name type="ordered locus">SPy_1249</name>
    <name type="ordered locus">M5005_Spy0959</name>
</gene>
<sequence length="134" mass="15528">MVTLFLSPSCTSCRKARAWLVKHEVDFQEHNIITSPLSRDELMSILSFTENGTEDIISTRSKVFQKLDIDVEELSISDLIDLIAKNPSLLRRPIIMDQKRMQIGFNEDEIRAFLSRDYRKQELRQATIKAEIEG</sequence>
<protein>
    <recommendedName>
        <fullName evidence="1">Global transcriptional regulator Spx</fullName>
    </recommendedName>
</protein>
<dbReference type="EMBL" id="AE004092">
    <property type="protein sequence ID" value="AAK34104.1"/>
    <property type="molecule type" value="Genomic_DNA"/>
</dbReference>
<dbReference type="EMBL" id="CP000017">
    <property type="protein sequence ID" value="AAZ51577.1"/>
    <property type="molecule type" value="Genomic_DNA"/>
</dbReference>
<dbReference type="RefSeq" id="NP_269383.1">
    <property type="nucleotide sequence ID" value="NC_002737.2"/>
</dbReference>
<dbReference type="SMR" id="P60381"/>
<dbReference type="PaxDb" id="1314-HKU360_01004"/>
<dbReference type="KEGG" id="spy:SPy_1249"/>
<dbReference type="KEGG" id="spz:M5005_Spy0959"/>
<dbReference type="PATRIC" id="fig|160490.10.peg.1092"/>
<dbReference type="HOGENOM" id="CLU_116644_1_1_9"/>
<dbReference type="OMA" id="RPIIMDD"/>
<dbReference type="Proteomes" id="UP000000750">
    <property type="component" value="Chromosome"/>
</dbReference>
<dbReference type="GO" id="GO:0005737">
    <property type="term" value="C:cytoplasm"/>
    <property type="evidence" value="ECO:0007669"/>
    <property type="project" value="UniProtKB-SubCell"/>
</dbReference>
<dbReference type="GO" id="GO:0045892">
    <property type="term" value="P:negative regulation of DNA-templated transcription"/>
    <property type="evidence" value="ECO:0007669"/>
    <property type="project" value="InterPro"/>
</dbReference>
<dbReference type="CDD" id="cd03032">
    <property type="entry name" value="ArsC_Spx"/>
    <property type="match status" value="1"/>
</dbReference>
<dbReference type="Gene3D" id="3.40.30.10">
    <property type="entry name" value="Glutaredoxin"/>
    <property type="match status" value="1"/>
</dbReference>
<dbReference type="HAMAP" id="MF_01132">
    <property type="entry name" value="Spx"/>
    <property type="match status" value="1"/>
</dbReference>
<dbReference type="InterPro" id="IPR006660">
    <property type="entry name" value="Arsenate_reductase-like"/>
</dbReference>
<dbReference type="InterPro" id="IPR023731">
    <property type="entry name" value="Spx"/>
</dbReference>
<dbReference type="InterPro" id="IPR036249">
    <property type="entry name" value="Thioredoxin-like_sf"/>
</dbReference>
<dbReference type="InterPro" id="IPR006504">
    <property type="entry name" value="Tscrpt_reg_Spx/MgsR"/>
</dbReference>
<dbReference type="NCBIfam" id="TIGR01617">
    <property type="entry name" value="arsC_related"/>
    <property type="match status" value="1"/>
</dbReference>
<dbReference type="NCBIfam" id="NF002459">
    <property type="entry name" value="PRK01655.1"/>
    <property type="match status" value="1"/>
</dbReference>
<dbReference type="PANTHER" id="PTHR30041">
    <property type="entry name" value="ARSENATE REDUCTASE"/>
    <property type="match status" value="1"/>
</dbReference>
<dbReference type="PANTHER" id="PTHR30041:SF7">
    <property type="entry name" value="GLOBAL TRANSCRIPTIONAL REGULATOR SPX"/>
    <property type="match status" value="1"/>
</dbReference>
<dbReference type="Pfam" id="PF03960">
    <property type="entry name" value="ArsC"/>
    <property type="match status" value="1"/>
</dbReference>
<dbReference type="SUPFAM" id="SSF52833">
    <property type="entry name" value="Thioredoxin-like"/>
    <property type="match status" value="1"/>
</dbReference>
<dbReference type="PROSITE" id="PS51353">
    <property type="entry name" value="ARSC"/>
    <property type="match status" value="1"/>
</dbReference>
<keyword id="KW-0963">Cytoplasm</keyword>
<keyword id="KW-1015">Disulfide bond</keyword>
<keyword id="KW-0676">Redox-active center</keyword>
<keyword id="KW-1185">Reference proteome</keyword>
<keyword id="KW-0804">Transcription</keyword>
<keyword id="KW-0805">Transcription regulation</keyword>
<feature type="chain" id="PRO_0000162577" description="Global transcriptional regulator Spx">
    <location>
        <begin position="1"/>
        <end position="134"/>
    </location>
</feature>
<feature type="disulfide bond" description="Redox-active" evidence="1">
    <location>
        <begin position="10"/>
        <end position="13"/>
    </location>
</feature>
<evidence type="ECO:0000255" key="1">
    <source>
        <dbReference type="HAMAP-Rule" id="MF_01132"/>
    </source>
</evidence>
<name>SPX_STRP1</name>
<organism>
    <name type="scientific">Streptococcus pyogenes serotype M1</name>
    <dbReference type="NCBI Taxonomy" id="301447"/>
    <lineage>
        <taxon>Bacteria</taxon>
        <taxon>Bacillati</taxon>
        <taxon>Bacillota</taxon>
        <taxon>Bacilli</taxon>
        <taxon>Lactobacillales</taxon>
        <taxon>Streptococcaceae</taxon>
        <taxon>Streptococcus</taxon>
    </lineage>
</organism>